<name>CTAA_EXISA</name>
<reference key="1">
    <citation type="journal article" date="2011" name="J. Bacteriol.">
        <title>Complete genome sequence of the Thermophilic Bacterium Exiguobacterium sp. AT1b.</title>
        <authorList>
            <person name="Vishnivetskaya T.A."/>
            <person name="Lucas S."/>
            <person name="Copeland A."/>
            <person name="Lapidus A."/>
            <person name="Glavina del Rio T."/>
            <person name="Dalin E."/>
            <person name="Tice H."/>
            <person name="Bruce D.C."/>
            <person name="Goodwin L.A."/>
            <person name="Pitluck S."/>
            <person name="Saunders E."/>
            <person name="Brettin T."/>
            <person name="Detter C."/>
            <person name="Han C."/>
            <person name="Larimer F."/>
            <person name="Land M.L."/>
            <person name="Hauser L.J."/>
            <person name="Kyrpides N.C."/>
            <person name="Ovchinnikova G."/>
            <person name="Kathariou S."/>
            <person name="Ramaley R.F."/>
            <person name="Rodrigues D.F."/>
            <person name="Hendrix C."/>
            <person name="Richardson P."/>
            <person name="Tiedje J.M."/>
        </authorList>
    </citation>
    <scope>NUCLEOTIDE SEQUENCE [LARGE SCALE GENOMIC DNA]</scope>
    <source>
        <strain>ATCC BAA-1283 / AT1b</strain>
    </source>
</reference>
<gene>
    <name evidence="1" type="primary">ctaA</name>
    <name type="ordered locus">EAT1b_2807</name>
</gene>
<sequence>MHKKLAFFSGFVTLGMMLVLIMGGTVTKTDSGDGCGTDWPLCHGKLIPTNPSVETMIEYSHRVVSGIEGLLIIALAIWTFIAVKHRVDVKIFAFLAFIFMLIQSIIGAGAVIWQQSDAILALHFGISLVSFASLLILTILLFEGDREHQVVSRRLRSHLYGLSIYTMIVVYTGAYVRHLGATYACVGWPICEQEVWTFESYVQMGHRVMAGLLVLYTLYVLYLARKEMNRLIERGMMASLFFILLQVGTGAWIVLGGHATYVPLLHAFLITCYFGILSYLSYHAYRSTARQDGAQLKNMNG</sequence>
<feature type="chain" id="PRO_1000215875" description="Heme A synthase">
    <location>
        <begin position="1"/>
        <end position="301"/>
    </location>
</feature>
<feature type="topological domain" description="Cytoplasmic" evidence="1">
    <location>
        <begin position="1"/>
        <end position="5"/>
    </location>
</feature>
<feature type="transmembrane region" description="Helical" evidence="1">
    <location>
        <begin position="6"/>
        <end position="26"/>
    </location>
</feature>
<feature type="topological domain" description="Extracellular" evidence="1">
    <location>
        <begin position="27"/>
        <end position="62"/>
    </location>
</feature>
<feature type="transmembrane region" description="Helical" evidence="1">
    <location>
        <begin position="63"/>
        <end position="83"/>
    </location>
</feature>
<feature type="topological domain" description="Cytoplasmic" evidence="1">
    <location>
        <begin position="84"/>
        <end position="90"/>
    </location>
</feature>
<feature type="transmembrane region" description="Helical" evidence="1">
    <location>
        <begin position="91"/>
        <end position="111"/>
    </location>
</feature>
<feature type="topological domain" description="Extracellular" evidence="1">
    <location>
        <begin position="112"/>
        <end position="121"/>
    </location>
</feature>
<feature type="transmembrane region" description="Helical" evidence="1">
    <location>
        <begin position="122"/>
        <end position="142"/>
    </location>
</feature>
<feature type="topological domain" description="Cytoplasmic" evidence="1">
    <location>
        <begin position="143"/>
        <end position="158"/>
    </location>
</feature>
<feature type="transmembrane region" description="Helical" evidence="1">
    <location>
        <begin position="159"/>
        <end position="179"/>
    </location>
</feature>
<feature type="topological domain" description="Extracellular" evidence="1">
    <location>
        <begin position="180"/>
        <end position="203"/>
    </location>
</feature>
<feature type="transmembrane region" description="Helical" evidence="1">
    <location>
        <begin position="204"/>
        <end position="224"/>
    </location>
</feature>
<feature type="topological domain" description="Cytoplasmic" evidence="1">
    <location>
        <begin position="225"/>
        <end position="234"/>
    </location>
</feature>
<feature type="transmembrane region" description="Helical" evidence="1">
    <location>
        <begin position="235"/>
        <end position="255"/>
    </location>
</feature>
<feature type="topological domain" description="Extracellular" evidence="1">
    <location>
        <begin position="256"/>
        <end position="259"/>
    </location>
</feature>
<feature type="transmembrane region" description="Helical" evidence="1">
    <location>
        <begin position="260"/>
        <end position="280"/>
    </location>
</feature>
<feature type="topological domain" description="Cytoplasmic" evidence="1">
    <location>
        <begin position="281"/>
        <end position="301"/>
    </location>
</feature>
<feature type="active site" evidence="1">
    <location>
        <position position="58"/>
    </location>
</feature>
<feature type="binding site" description="axial binding residue" evidence="1">
    <location>
        <position position="61"/>
    </location>
    <ligand>
        <name>heme o</name>
        <dbReference type="ChEBI" id="CHEBI:24480"/>
    </ligand>
    <ligandPart>
        <name>Fe</name>
        <dbReference type="ChEBI" id="CHEBI:18248"/>
    </ligandPart>
</feature>
<feature type="binding site" description="axial binding residue" evidence="1">
    <location>
        <position position="123"/>
    </location>
    <ligand>
        <name>heme o</name>
        <dbReference type="ChEBI" id="CHEBI:24480"/>
    </ligand>
    <ligandPart>
        <name>Fe</name>
        <dbReference type="ChEBI" id="CHEBI:18248"/>
    </ligandPart>
</feature>
<feature type="binding site" description="axial binding residue" evidence="1">
    <location>
        <position position="206"/>
    </location>
    <ligand>
        <name>heme b</name>
        <dbReference type="ChEBI" id="CHEBI:60344"/>
    </ligand>
    <ligandPart>
        <name>Fe</name>
        <dbReference type="ChEBI" id="CHEBI:18248"/>
    </ligandPart>
</feature>
<feature type="binding site" description="axial binding residue" evidence="1">
    <location>
        <position position="266"/>
    </location>
    <ligand>
        <name>heme b</name>
        <dbReference type="ChEBI" id="CHEBI:60344"/>
    </ligand>
    <ligandPart>
        <name>Fe</name>
        <dbReference type="ChEBI" id="CHEBI:18248"/>
    </ligandPart>
</feature>
<feature type="disulfide bond" description="Essential for catalytic activity" evidence="1">
    <location>
        <begin position="35"/>
        <end position="42"/>
    </location>
</feature>
<feature type="disulfide bond" evidence="1">
    <location>
        <begin position="185"/>
        <end position="191"/>
    </location>
</feature>
<organism>
    <name type="scientific">Exiguobacterium sp. (strain ATCC BAA-1283 / AT1b)</name>
    <dbReference type="NCBI Taxonomy" id="360911"/>
    <lineage>
        <taxon>Bacteria</taxon>
        <taxon>Bacillati</taxon>
        <taxon>Bacillota</taxon>
        <taxon>Bacilli</taxon>
        <taxon>Bacillales</taxon>
        <taxon>Bacillales Family XII. Incertae Sedis</taxon>
        <taxon>Exiguobacterium</taxon>
    </lineage>
</organism>
<comment type="function">
    <text evidence="1">Catalyzes the conversion of heme O to heme A by two successive hydroxylations of the methyl group at C8. The first hydroxylation forms heme I, the second hydroxylation results in an unstable dihydroxymethyl group, which spontaneously dehydrates, resulting in the formyl group of heme A.</text>
</comment>
<comment type="catalytic activity">
    <reaction evidence="1">
        <text>Fe(II)-heme o + 2 A + H2O = Fe(II)-heme a + 2 AH2</text>
        <dbReference type="Rhea" id="RHEA:63388"/>
        <dbReference type="ChEBI" id="CHEBI:13193"/>
        <dbReference type="ChEBI" id="CHEBI:15377"/>
        <dbReference type="ChEBI" id="CHEBI:17499"/>
        <dbReference type="ChEBI" id="CHEBI:60530"/>
        <dbReference type="ChEBI" id="CHEBI:61715"/>
        <dbReference type="EC" id="1.17.99.9"/>
    </reaction>
    <physiologicalReaction direction="left-to-right" evidence="1">
        <dbReference type="Rhea" id="RHEA:63389"/>
    </physiologicalReaction>
</comment>
<comment type="cofactor">
    <cofactor evidence="1">
        <name>heme b</name>
        <dbReference type="ChEBI" id="CHEBI:60344"/>
    </cofactor>
</comment>
<comment type="pathway">
    <text evidence="1">Porphyrin-containing compound metabolism; heme A biosynthesis; heme A from heme O: step 1/1.</text>
</comment>
<comment type="subunit">
    <text evidence="1">Interacts with CtaB.</text>
</comment>
<comment type="subcellular location">
    <subcellularLocation>
        <location evidence="1">Cell membrane</location>
        <topology evidence="1">Multi-pass membrane protein</topology>
    </subcellularLocation>
</comment>
<comment type="domain">
    <text evidence="1">The N-half (TM1-TM4) and C-half (TM5-TM8) domains are connected by an intracellular loop. Each domain is formed from four-helix bundles and they align in a pseudo twofold symmetry manner. The N-half domain is the substrate-heme O binding domain and the C-half domain is the cofactor heme B binding domain.</text>
</comment>
<comment type="domain">
    <text evidence="1">The cysteines of disulfide bond Cys-35 and Cys-42 may be involved in transfer of reducing equivalents from quinol in the membrane to the active site of the enzyme.</text>
</comment>
<comment type="similarity">
    <text evidence="1">Belongs to the COX15/CtaA family. Type 1 subfamily.</text>
</comment>
<evidence type="ECO:0000255" key="1">
    <source>
        <dbReference type="HAMAP-Rule" id="MF_01664"/>
    </source>
</evidence>
<keyword id="KW-1003">Cell membrane</keyword>
<keyword id="KW-1015">Disulfide bond</keyword>
<keyword id="KW-0350">Heme biosynthesis</keyword>
<keyword id="KW-0408">Iron</keyword>
<keyword id="KW-0472">Membrane</keyword>
<keyword id="KW-0479">Metal-binding</keyword>
<keyword id="KW-0560">Oxidoreductase</keyword>
<keyword id="KW-0812">Transmembrane</keyword>
<keyword id="KW-1133">Transmembrane helix</keyword>
<accession>C4L5D6</accession>
<dbReference type="EC" id="1.17.99.9" evidence="1"/>
<dbReference type="EMBL" id="CP001615">
    <property type="protein sequence ID" value="ACQ71721.1"/>
    <property type="molecule type" value="Genomic_DNA"/>
</dbReference>
<dbReference type="RefSeq" id="WP_015881280.1">
    <property type="nucleotide sequence ID" value="NC_012673.1"/>
</dbReference>
<dbReference type="SMR" id="C4L5D6"/>
<dbReference type="STRING" id="360911.EAT1b_2807"/>
<dbReference type="KEGG" id="eat:EAT1b_2807"/>
<dbReference type="eggNOG" id="COG1612">
    <property type="taxonomic scope" value="Bacteria"/>
</dbReference>
<dbReference type="HOGENOM" id="CLU_041525_3_0_9"/>
<dbReference type="OrthoDB" id="9816428at2"/>
<dbReference type="UniPathway" id="UPA00269">
    <property type="reaction ID" value="UER00713"/>
</dbReference>
<dbReference type="Proteomes" id="UP000000716">
    <property type="component" value="Chromosome"/>
</dbReference>
<dbReference type="GO" id="GO:0005886">
    <property type="term" value="C:plasma membrane"/>
    <property type="evidence" value="ECO:0007669"/>
    <property type="project" value="UniProtKB-SubCell"/>
</dbReference>
<dbReference type="GO" id="GO:0046872">
    <property type="term" value="F:metal ion binding"/>
    <property type="evidence" value="ECO:0007669"/>
    <property type="project" value="UniProtKB-KW"/>
</dbReference>
<dbReference type="GO" id="GO:0016653">
    <property type="term" value="F:oxidoreductase activity, acting on NAD(P)H, heme protein as acceptor"/>
    <property type="evidence" value="ECO:0007669"/>
    <property type="project" value="InterPro"/>
</dbReference>
<dbReference type="GO" id="GO:0006784">
    <property type="term" value="P:heme A biosynthetic process"/>
    <property type="evidence" value="ECO:0007669"/>
    <property type="project" value="UniProtKB-UniRule"/>
</dbReference>
<dbReference type="HAMAP" id="MF_01664">
    <property type="entry name" value="HemeA_synth_type1"/>
    <property type="match status" value="1"/>
</dbReference>
<dbReference type="InterPro" id="IPR003780">
    <property type="entry name" value="COX15/CtaA_fam"/>
</dbReference>
<dbReference type="InterPro" id="IPR050450">
    <property type="entry name" value="COX15/CtaA_HemeA_synthase"/>
</dbReference>
<dbReference type="InterPro" id="IPR023755">
    <property type="entry name" value="HemeA_Synthase_type1"/>
</dbReference>
<dbReference type="PANTHER" id="PTHR35457">
    <property type="entry name" value="HEME A SYNTHASE"/>
    <property type="match status" value="1"/>
</dbReference>
<dbReference type="PANTHER" id="PTHR35457:SF1">
    <property type="entry name" value="HEME A SYNTHASE"/>
    <property type="match status" value="1"/>
</dbReference>
<dbReference type="Pfam" id="PF02628">
    <property type="entry name" value="COX15-CtaA"/>
    <property type="match status" value="1"/>
</dbReference>
<proteinExistence type="inferred from homology"/>
<protein>
    <recommendedName>
        <fullName evidence="1">Heme A synthase</fullName>
        <shortName evidence="1">HAS</shortName>
        <ecNumber evidence="1">1.17.99.9</ecNumber>
    </recommendedName>
    <alternativeName>
        <fullName evidence="1">Cytochrome aa3-controlling protein</fullName>
    </alternativeName>
</protein>